<keyword id="KW-0030">Aminoacyl-tRNA synthetase</keyword>
<keyword id="KW-0067">ATP-binding</keyword>
<keyword id="KW-0963">Cytoplasm</keyword>
<keyword id="KW-0436">Ligase</keyword>
<keyword id="KW-0547">Nucleotide-binding</keyword>
<keyword id="KW-0648">Protein biosynthesis</keyword>
<keyword id="KW-1185">Reference proteome</keyword>
<name>SYE_MYCBO</name>
<feature type="chain" id="PRO_0000119599" description="Glutamate--tRNA ligase">
    <location>
        <begin position="1"/>
        <end position="490"/>
    </location>
</feature>
<feature type="short sequence motif" description="'HIGH' region" evidence="1">
    <location>
        <begin position="13"/>
        <end position="23"/>
    </location>
</feature>
<feature type="short sequence motif" description="'KMSKS' region" evidence="1">
    <location>
        <begin position="257"/>
        <end position="261"/>
    </location>
</feature>
<feature type="binding site" evidence="1">
    <location>
        <position position="260"/>
    </location>
    <ligand>
        <name>ATP</name>
        <dbReference type="ChEBI" id="CHEBI:30616"/>
    </ligand>
</feature>
<protein>
    <recommendedName>
        <fullName evidence="1">Glutamate--tRNA ligase</fullName>
        <ecNumber evidence="1">6.1.1.17</ecNumber>
    </recommendedName>
    <alternativeName>
        <fullName evidence="1">Glutamyl-tRNA synthetase</fullName>
        <shortName evidence="1">GluRS</shortName>
    </alternativeName>
</protein>
<proteinExistence type="inferred from homology"/>
<dbReference type="EC" id="6.1.1.17" evidence="1"/>
<dbReference type="EMBL" id="LT708304">
    <property type="protein sequence ID" value="SIU01640.1"/>
    <property type="molecule type" value="Genomic_DNA"/>
</dbReference>
<dbReference type="RefSeq" id="NP_856661.1">
    <property type="nucleotide sequence ID" value="NC_002945.3"/>
</dbReference>
<dbReference type="RefSeq" id="WP_003415122.1">
    <property type="nucleotide sequence ID" value="NC_002945.4"/>
</dbReference>
<dbReference type="SMR" id="P0A637"/>
<dbReference type="KEGG" id="mbo:BQ2027_MB3016C"/>
<dbReference type="PATRIC" id="fig|233413.5.peg.3315"/>
<dbReference type="Proteomes" id="UP000001419">
    <property type="component" value="Chromosome"/>
</dbReference>
<dbReference type="GO" id="GO:0005829">
    <property type="term" value="C:cytosol"/>
    <property type="evidence" value="ECO:0007669"/>
    <property type="project" value="TreeGrafter"/>
</dbReference>
<dbReference type="GO" id="GO:0005524">
    <property type="term" value="F:ATP binding"/>
    <property type="evidence" value="ECO:0007669"/>
    <property type="project" value="UniProtKB-UniRule"/>
</dbReference>
<dbReference type="GO" id="GO:0004818">
    <property type="term" value="F:glutamate-tRNA ligase activity"/>
    <property type="evidence" value="ECO:0007669"/>
    <property type="project" value="UniProtKB-UniRule"/>
</dbReference>
<dbReference type="GO" id="GO:0000049">
    <property type="term" value="F:tRNA binding"/>
    <property type="evidence" value="ECO:0007669"/>
    <property type="project" value="InterPro"/>
</dbReference>
<dbReference type="GO" id="GO:0008270">
    <property type="term" value="F:zinc ion binding"/>
    <property type="evidence" value="ECO:0007669"/>
    <property type="project" value="InterPro"/>
</dbReference>
<dbReference type="GO" id="GO:0006424">
    <property type="term" value="P:glutamyl-tRNA aminoacylation"/>
    <property type="evidence" value="ECO:0007669"/>
    <property type="project" value="UniProtKB-UniRule"/>
</dbReference>
<dbReference type="CDD" id="cd00808">
    <property type="entry name" value="GluRS_core"/>
    <property type="match status" value="1"/>
</dbReference>
<dbReference type="FunFam" id="3.40.50.620:FF:000149">
    <property type="entry name" value="Glutamate--tRNA ligase"/>
    <property type="match status" value="1"/>
</dbReference>
<dbReference type="FunFam" id="3.90.800.10:FF:000003">
    <property type="entry name" value="Glutamate--tRNA ligase"/>
    <property type="match status" value="1"/>
</dbReference>
<dbReference type="Gene3D" id="1.10.10.350">
    <property type="match status" value="1"/>
</dbReference>
<dbReference type="Gene3D" id="1.10.8.70">
    <property type="entry name" value="Glutamate-tRNA synthetase, class I, anticodon-binding domain 1"/>
    <property type="match status" value="1"/>
</dbReference>
<dbReference type="Gene3D" id="1.10.1160.10">
    <property type="entry name" value="Glutamyl-trna Synthetase, Domain 2"/>
    <property type="match status" value="1"/>
</dbReference>
<dbReference type="Gene3D" id="3.90.800.10">
    <property type="entry name" value="Glutamyl-tRNA Synthetase, Domain 3"/>
    <property type="match status" value="1"/>
</dbReference>
<dbReference type="Gene3D" id="3.40.50.620">
    <property type="entry name" value="HUPs"/>
    <property type="match status" value="1"/>
</dbReference>
<dbReference type="HAMAP" id="MF_00022">
    <property type="entry name" value="Glu_tRNA_synth_type1"/>
    <property type="match status" value="1"/>
</dbReference>
<dbReference type="InterPro" id="IPR045462">
    <property type="entry name" value="aa-tRNA-synth_I_cd-bd"/>
</dbReference>
<dbReference type="InterPro" id="IPR020751">
    <property type="entry name" value="aa-tRNA-synth_I_codon-bd_sub2"/>
</dbReference>
<dbReference type="InterPro" id="IPR008925">
    <property type="entry name" value="aa_tRNA-synth_I_cd-bd_sf"/>
</dbReference>
<dbReference type="InterPro" id="IPR004527">
    <property type="entry name" value="Glu-tRNA-ligase_bac/mito"/>
</dbReference>
<dbReference type="InterPro" id="IPR020752">
    <property type="entry name" value="Glu-tRNA-synth_I_codon-bd_sub1"/>
</dbReference>
<dbReference type="InterPro" id="IPR000924">
    <property type="entry name" value="Glu/Gln-tRNA-synth"/>
</dbReference>
<dbReference type="InterPro" id="IPR020058">
    <property type="entry name" value="Glu/Gln-tRNA-synth_Ib_cat-dom"/>
</dbReference>
<dbReference type="InterPro" id="IPR020061">
    <property type="entry name" value="Glu_tRNA_lig_a-bdl"/>
</dbReference>
<dbReference type="InterPro" id="IPR049940">
    <property type="entry name" value="GluQ/Sye"/>
</dbReference>
<dbReference type="InterPro" id="IPR033910">
    <property type="entry name" value="GluRS_core"/>
</dbReference>
<dbReference type="InterPro" id="IPR014729">
    <property type="entry name" value="Rossmann-like_a/b/a_fold"/>
</dbReference>
<dbReference type="NCBIfam" id="TIGR00464">
    <property type="entry name" value="gltX_bact"/>
    <property type="match status" value="1"/>
</dbReference>
<dbReference type="PANTHER" id="PTHR43311">
    <property type="entry name" value="GLUTAMATE--TRNA LIGASE"/>
    <property type="match status" value="1"/>
</dbReference>
<dbReference type="PANTHER" id="PTHR43311:SF2">
    <property type="entry name" value="GLUTAMATE--TRNA LIGASE, MITOCHONDRIAL-RELATED"/>
    <property type="match status" value="1"/>
</dbReference>
<dbReference type="Pfam" id="PF19269">
    <property type="entry name" value="Anticodon_2"/>
    <property type="match status" value="1"/>
</dbReference>
<dbReference type="Pfam" id="PF00749">
    <property type="entry name" value="tRNA-synt_1c"/>
    <property type="match status" value="1"/>
</dbReference>
<dbReference type="PRINTS" id="PR00987">
    <property type="entry name" value="TRNASYNTHGLU"/>
</dbReference>
<dbReference type="SUPFAM" id="SSF48163">
    <property type="entry name" value="An anticodon-binding domain of class I aminoacyl-tRNA synthetases"/>
    <property type="match status" value="1"/>
</dbReference>
<dbReference type="SUPFAM" id="SSF52374">
    <property type="entry name" value="Nucleotidylyl transferase"/>
    <property type="match status" value="1"/>
</dbReference>
<reference key="1">
    <citation type="journal article" date="2003" name="Proc. Natl. Acad. Sci. U.S.A.">
        <title>The complete genome sequence of Mycobacterium bovis.</title>
        <authorList>
            <person name="Garnier T."/>
            <person name="Eiglmeier K."/>
            <person name="Camus J.-C."/>
            <person name="Medina N."/>
            <person name="Mansoor H."/>
            <person name="Pryor M."/>
            <person name="Duthoy S."/>
            <person name="Grondin S."/>
            <person name="Lacroix C."/>
            <person name="Monsempe C."/>
            <person name="Simon S."/>
            <person name="Harris B."/>
            <person name="Atkin R."/>
            <person name="Doggett J."/>
            <person name="Mayes R."/>
            <person name="Keating L."/>
            <person name="Wheeler P.R."/>
            <person name="Parkhill J."/>
            <person name="Barrell B.G."/>
            <person name="Cole S.T."/>
            <person name="Gordon S.V."/>
            <person name="Hewinson R.G."/>
        </authorList>
    </citation>
    <scope>NUCLEOTIDE SEQUENCE [LARGE SCALE GENOMIC DNA]</scope>
    <source>
        <strain>ATCC BAA-935 / AF2122/97</strain>
    </source>
</reference>
<reference key="2">
    <citation type="journal article" date="2017" name="Genome Announc.">
        <title>Updated reference genome sequence and annotation of Mycobacterium bovis AF2122/97.</title>
        <authorList>
            <person name="Malone K.M."/>
            <person name="Farrell D."/>
            <person name="Stuber T.P."/>
            <person name="Schubert O.T."/>
            <person name="Aebersold R."/>
            <person name="Robbe-Austerman S."/>
            <person name="Gordon S.V."/>
        </authorList>
    </citation>
    <scope>NUCLEOTIDE SEQUENCE [LARGE SCALE GENOMIC DNA]</scope>
    <scope>GENOME REANNOTATION</scope>
    <source>
        <strain>ATCC BAA-935 / AF2122/97</strain>
    </source>
</reference>
<comment type="function">
    <text evidence="1">Catalyzes the attachment of glutamate to tRNA(Glu) in a two-step reaction: glutamate is first activated by ATP to form Glu-AMP and then transferred to the acceptor end of tRNA(Glu).</text>
</comment>
<comment type="catalytic activity">
    <reaction evidence="1">
        <text>tRNA(Glu) + L-glutamate + ATP = L-glutamyl-tRNA(Glu) + AMP + diphosphate</text>
        <dbReference type="Rhea" id="RHEA:23540"/>
        <dbReference type="Rhea" id="RHEA-COMP:9663"/>
        <dbReference type="Rhea" id="RHEA-COMP:9680"/>
        <dbReference type="ChEBI" id="CHEBI:29985"/>
        <dbReference type="ChEBI" id="CHEBI:30616"/>
        <dbReference type="ChEBI" id="CHEBI:33019"/>
        <dbReference type="ChEBI" id="CHEBI:78442"/>
        <dbReference type="ChEBI" id="CHEBI:78520"/>
        <dbReference type="ChEBI" id="CHEBI:456215"/>
        <dbReference type="EC" id="6.1.1.17"/>
    </reaction>
</comment>
<comment type="subunit">
    <text evidence="1">Monomer.</text>
</comment>
<comment type="subcellular location">
    <subcellularLocation>
        <location evidence="1">Cytoplasm</location>
    </subcellularLocation>
</comment>
<comment type="similarity">
    <text evidence="1">Belongs to the class-I aminoacyl-tRNA synthetase family. Glutamate--tRNA ligase type 1 subfamily.</text>
</comment>
<accession>P0A637</accession>
<accession>A0A1R3Y2T6</accession>
<accession>O53241</accession>
<accession>X2BMA1</accession>
<evidence type="ECO:0000255" key="1">
    <source>
        <dbReference type="HAMAP-Rule" id="MF_00022"/>
    </source>
</evidence>
<organism>
    <name type="scientific">Mycobacterium bovis (strain ATCC BAA-935 / AF2122/97)</name>
    <dbReference type="NCBI Taxonomy" id="233413"/>
    <lineage>
        <taxon>Bacteria</taxon>
        <taxon>Bacillati</taxon>
        <taxon>Actinomycetota</taxon>
        <taxon>Actinomycetes</taxon>
        <taxon>Mycobacteriales</taxon>
        <taxon>Mycobacteriaceae</taxon>
        <taxon>Mycobacterium</taxon>
        <taxon>Mycobacterium tuberculosis complex</taxon>
    </lineage>
</organism>
<sequence length="490" mass="53864">MTATETVRVRFCPSPTGTPHVGLVRTALFNWAYARHTGGTFVFRIEDTDAQRDSEESYLALLDALRWLGLDWDEGPEVGGPYGPYRQSQRAEIYRDVLARLLAAGEAYHAFSTPEEVEARHVAAGRNPKLGYDNFDRHLTDAQRAAYLAEGRQPVVRLRMPDDDLAWNDLVRGPVTFAAGSVPDFALTRASGDPLYTLVNPCDDALMKITHVLRGEDLLPSTPRQLALHQALIRIGVAERIPKFAHLPTVLGEGTKKLSKRDPQSNLFAHRDRGFIPEGLLNYLALLGWSIADDHDLFGLDEMVAAFDVADVNSSPARFDQKKADALNAEHIRMLDVGDFTVRLRDHLDTHGHHIALDEAAFAAAAELVQTRIVVLGDAWELLKFFNDDQYVIDPKAAAKELGPDGAAVLDAALAALTSVTDWTAPLIEAALKDALIEGLALKPRKAFSPIRVAATGTTVSPPLFESLELLGRDRSMQRLRAARQLVGHA</sequence>
<gene>
    <name evidence="1" type="primary">gltX</name>
    <name type="synonym">gltS</name>
    <name type="ordered locus">BQ2027_MB3016C</name>
</gene>